<reference key="1">
    <citation type="journal article" date="2009" name="Vaccine">
        <title>Whole genome sequence analysis of Mycobacterium bovis bacillus Calmette-Guerin (BCG) Tokyo 172: a comparative study of BCG vaccine substrains.</title>
        <authorList>
            <person name="Seki M."/>
            <person name="Honda I."/>
            <person name="Fujita I."/>
            <person name="Yano I."/>
            <person name="Yamamoto S."/>
            <person name="Koyama A."/>
        </authorList>
    </citation>
    <scope>NUCLEOTIDE SEQUENCE [LARGE SCALE GENOMIC DNA]</scope>
    <source>
        <strain>BCG / Tokyo 172 / ATCC 35737 / TMC 1019</strain>
    </source>
</reference>
<comment type="function">
    <text evidence="1">Catalyzes the GTP-dependent ribosomal translocation step during translation elongation. During this step, the ribosome changes from the pre-translocational (PRE) to the post-translocational (POST) state as the newly formed A-site-bound peptidyl-tRNA and P-site-bound deacylated tRNA move to the P and E sites, respectively. Catalyzes the coordinated movement of the two tRNA molecules, the mRNA and conformational changes in the ribosome.</text>
</comment>
<comment type="subcellular location">
    <subcellularLocation>
        <location evidence="1">Cytoplasm</location>
    </subcellularLocation>
</comment>
<comment type="similarity">
    <text evidence="1">Belongs to the TRAFAC class translation factor GTPase superfamily. Classic translation factor GTPase family. EF-G/EF-2 subfamily.</text>
</comment>
<dbReference type="EMBL" id="AP010918">
    <property type="protein sequence ID" value="BAH24996.1"/>
    <property type="molecule type" value="Genomic_DNA"/>
</dbReference>
<dbReference type="RefSeq" id="WP_003898554.1">
    <property type="nucleotide sequence ID" value="NZ_CP014566.1"/>
</dbReference>
<dbReference type="SMR" id="C1AL17"/>
<dbReference type="GeneID" id="45424646"/>
<dbReference type="KEGG" id="mbt:JTY_0703"/>
<dbReference type="HOGENOM" id="CLU_002794_4_1_11"/>
<dbReference type="GO" id="GO:0005737">
    <property type="term" value="C:cytoplasm"/>
    <property type="evidence" value="ECO:0007669"/>
    <property type="project" value="UniProtKB-SubCell"/>
</dbReference>
<dbReference type="GO" id="GO:0005525">
    <property type="term" value="F:GTP binding"/>
    <property type="evidence" value="ECO:0007669"/>
    <property type="project" value="UniProtKB-UniRule"/>
</dbReference>
<dbReference type="GO" id="GO:0003924">
    <property type="term" value="F:GTPase activity"/>
    <property type="evidence" value="ECO:0007669"/>
    <property type="project" value="InterPro"/>
</dbReference>
<dbReference type="GO" id="GO:0003746">
    <property type="term" value="F:translation elongation factor activity"/>
    <property type="evidence" value="ECO:0007669"/>
    <property type="project" value="UniProtKB-UniRule"/>
</dbReference>
<dbReference type="GO" id="GO:0032790">
    <property type="term" value="P:ribosome disassembly"/>
    <property type="evidence" value="ECO:0007669"/>
    <property type="project" value="TreeGrafter"/>
</dbReference>
<dbReference type="CDD" id="cd01886">
    <property type="entry name" value="EF-G"/>
    <property type="match status" value="1"/>
</dbReference>
<dbReference type="CDD" id="cd16262">
    <property type="entry name" value="EFG_III"/>
    <property type="match status" value="1"/>
</dbReference>
<dbReference type="CDD" id="cd01434">
    <property type="entry name" value="EFG_mtEFG1_IV"/>
    <property type="match status" value="1"/>
</dbReference>
<dbReference type="CDD" id="cd03713">
    <property type="entry name" value="EFG_mtEFG_C"/>
    <property type="match status" value="1"/>
</dbReference>
<dbReference type="CDD" id="cd04088">
    <property type="entry name" value="EFG_mtEFG_II"/>
    <property type="match status" value="1"/>
</dbReference>
<dbReference type="FunFam" id="2.40.30.10:FF:000006">
    <property type="entry name" value="Elongation factor G"/>
    <property type="match status" value="1"/>
</dbReference>
<dbReference type="FunFam" id="3.30.230.10:FF:000003">
    <property type="entry name" value="Elongation factor G"/>
    <property type="match status" value="1"/>
</dbReference>
<dbReference type="FunFam" id="3.30.70.240:FF:000001">
    <property type="entry name" value="Elongation factor G"/>
    <property type="match status" value="1"/>
</dbReference>
<dbReference type="FunFam" id="3.30.70.870:FF:000001">
    <property type="entry name" value="Elongation factor G"/>
    <property type="match status" value="1"/>
</dbReference>
<dbReference type="FunFam" id="3.40.50.300:FF:000029">
    <property type="entry name" value="Elongation factor G"/>
    <property type="match status" value="1"/>
</dbReference>
<dbReference type="Gene3D" id="3.30.230.10">
    <property type="match status" value="1"/>
</dbReference>
<dbReference type="Gene3D" id="3.30.70.240">
    <property type="match status" value="1"/>
</dbReference>
<dbReference type="Gene3D" id="3.30.70.870">
    <property type="entry name" value="Elongation Factor G (Translational Gtpase), domain 3"/>
    <property type="match status" value="1"/>
</dbReference>
<dbReference type="Gene3D" id="3.40.50.300">
    <property type="entry name" value="P-loop containing nucleotide triphosphate hydrolases"/>
    <property type="match status" value="1"/>
</dbReference>
<dbReference type="Gene3D" id="2.40.30.10">
    <property type="entry name" value="Translation factors"/>
    <property type="match status" value="1"/>
</dbReference>
<dbReference type="HAMAP" id="MF_00054_B">
    <property type="entry name" value="EF_G_EF_2_B"/>
    <property type="match status" value="1"/>
</dbReference>
<dbReference type="InterPro" id="IPR041095">
    <property type="entry name" value="EFG_II"/>
</dbReference>
<dbReference type="InterPro" id="IPR009022">
    <property type="entry name" value="EFG_III"/>
</dbReference>
<dbReference type="InterPro" id="IPR035647">
    <property type="entry name" value="EFG_III/V"/>
</dbReference>
<dbReference type="InterPro" id="IPR047872">
    <property type="entry name" value="EFG_IV"/>
</dbReference>
<dbReference type="InterPro" id="IPR035649">
    <property type="entry name" value="EFG_V"/>
</dbReference>
<dbReference type="InterPro" id="IPR000640">
    <property type="entry name" value="EFG_V-like"/>
</dbReference>
<dbReference type="InterPro" id="IPR004161">
    <property type="entry name" value="EFTu-like_2"/>
</dbReference>
<dbReference type="InterPro" id="IPR031157">
    <property type="entry name" value="G_TR_CS"/>
</dbReference>
<dbReference type="InterPro" id="IPR027417">
    <property type="entry name" value="P-loop_NTPase"/>
</dbReference>
<dbReference type="InterPro" id="IPR020568">
    <property type="entry name" value="Ribosomal_Su5_D2-typ_SF"/>
</dbReference>
<dbReference type="InterPro" id="IPR014721">
    <property type="entry name" value="Ribsml_uS5_D2-typ_fold_subgr"/>
</dbReference>
<dbReference type="InterPro" id="IPR005225">
    <property type="entry name" value="Small_GTP-bd"/>
</dbReference>
<dbReference type="InterPro" id="IPR000795">
    <property type="entry name" value="T_Tr_GTP-bd_dom"/>
</dbReference>
<dbReference type="InterPro" id="IPR009000">
    <property type="entry name" value="Transl_B-barrel_sf"/>
</dbReference>
<dbReference type="InterPro" id="IPR004540">
    <property type="entry name" value="Transl_elong_EFG/EF2"/>
</dbReference>
<dbReference type="InterPro" id="IPR005517">
    <property type="entry name" value="Transl_elong_EFG/EF2_IV"/>
</dbReference>
<dbReference type="NCBIfam" id="TIGR00484">
    <property type="entry name" value="EF-G"/>
    <property type="match status" value="1"/>
</dbReference>
<dbReference type="NCBIfam" id="NF009381">
    <property type="entry name" value="PRK12740.1-5"/>
    <property type="match status" value="1"/>
</dbReference>
<dbReference type="NCBIfam" id="TIGR00231">
    <property type="entry name" value="small_GTP"/>
    <property type="match status" value="1"/>
</dbReference>
<dbReference type="PANTHER" id="PTHR43261:SF1">
    <property type="entry name" value="RIBOSOME-RELEASING FACTOR 2, MITOCHONDRIAL"/>
    <property type="match status" value="1"/>
</dbReference>
<dbReference type="PANTHER" id="PTHR43261">
    <property type="entry name" value="TRANSLATION ELONGATION FACTOR G-RELATED"/>
    <property type="match status" value="1"/>
</dbReference>
<dbReference type="Pfam" id="PF00679">
    <property type="entry name" value="EFG_C"/>
    <property type="match status" value="1"/>
</dbReference>
<dbReference type="Pfam" id="PF14492">
    <property type="entry name" value="EFG_III"/>
    <property type="match status" value="1"/>
</dbReference>
<dbReference type="Pfam" id="PF03764">
    <property type="entry name" value="EFG_IV"/>
    <property type="match status" value="1"/>
</dbReference>
<dbReference type="Pfam" id="PF00009">
    <property type="entry name" value="GTP_EFTU"/>
    <property type="match status" value="1"/>
</dbReference>
<dbReference type="Pfam" id="PF03144">
    <property type="entry name" value="GTP_EFTU_D2"/>
    <property type="match status" value="1"/>
</dbReference>
<dbReference type="PRINTS" id="PR00315">
    <property type="entry name" value="ELONGATNFCT"/>
</dbReference>
<dbReference type="SMART" id="SM00838">
    <property type="entry name" value="EFG_C"/>
    <property type="match status" value="1"/>
</dbReference>
<dbReference type="SMART" id="SM00889">
    <property type="entry name" value="EFG_IV"/>
    <property type="match status" value="1"/>
</dbReference>
<dbReference type="SUPFAM" id="SSF54980">
    <property type="entry name" value="EF-G C-terminal domain-like"/>
    <property type="match status" value="2"/>
</dbReference>
<dbReference type="SUPFAM" id="SSF52540">
    <property type="entry name" value="P-loop containing nucleoside triphosphate hydrolases"/>
    <property type="match status" value="1"/>
</dbReference>
<dbReference type="SUPFAM" id="SSF54211">
    <property type="entry name" value="Ribosomal protein S5 domain 2-like"/>
    <property type="match status" value="1"/>
</dbReference>
<dbReference type="SUPFAM" id="SSF50447">
    <property type="entry name" value="Translation proteins"/>
    <property type="match status" value="1"/>
</dbReference>
<dbReference type="PROSITE" id="PS00301">
    <property type="entry name" value="G_TR_1"/>
    <property type="match status" value="1"/>
</dbReference>
<dbReference type="PROSITE" id="PS51722">
    <property type="entry name" value="G_TR_2"/>
    <property type="match status" value="1"/>
</dbReference>
<accession>C1AL17</accession>
<evidence type="ECO:0000255" key="1">
    <source>
        <dbReference type="HAMAP-Rule" id="MF_00054"/>
    </source>
</evidence>
<protein>
    <recommendedName>
        <fullName evidence="1">Elongation factor G</fullName>
        <shortName evidence="1">EF-G</shortName>
    </recommendedName>
</protein>
<sequence>MAQKDVLTDLSRVRNFGIMAHIDAGKTTTTERILYYTGINYKIGEVHDGAATMDWMEQEQERGITITSAATTTFWKDNQLNIIDTPGHVDFTVEVERNLRVLDGAVAVFDGKEGVEPQSEQVWRQADKYDVPRICFVNKMDKIGADFYFSVRTMGERLGANAVPIQLPVGAEADFEGVVDLVEMNAKVWRGETKLGETYDTVEIPADLAEQAEEYRTKLLEVVAESDEHLLEKYLGGEELTVDEIKGAIRKLTIASEIYPVLCGSAFKNKGVQPMLDAVVDYLPSPLDVPPAIGHAPAKEDEEVVRKATTDEPFAALAFKIATHPFFGKLTYIRVYSGTVESGSQVINATKGKKERLGKLFQMHSNKENPVDRASAGHIYAVIGLKDTTTGDTLSDPNQQIVLESMTFPDPVIEVAIEPKTKSDQEKLSLSIQKLAEEDPTFKVHLDSETGQTVIGGMGELHLDILVDRMRREFKVEANVGKPQVAYKETIKRLVQNVEYTHKKQTGGSGQFAKVIINLEPFTGEEGATYEFESKVTGGRIPREYIPSVDAGAQDAMQYGVLAGYPLVNLKVTLLDGAYHEVDSSEMAFKIAGSQVLKKAAALAQPVILEPIMAVEVTTPEDYMGDVIGDLNSRRGQIQAMEERAGARVVRAHVPLSEMFGYVGDLRSKTQGRANYSMVFDSYSEVPANVSKEIIAKATGE</sequence>
<organism>
    <name type="scientific">Mycobacterium bovis (strain BCG / Tokyo 172 / ATCC 35737 / TMC 1019)</name>
    <dbReference type="NCBI Taxonomy" id="561275"/>
    <lineage>
        <taxon>Bacteria</taxon>
        <taxon>Bacillati</taxon>
        <taxon>Actinomycetota</taxon>
        <taxon>Actinomycetes</taxon>
        <taxon>Mycobacteriales</taxon>
        <taxon>Mycobacteriaceae</taxon>
        <taxon>Mycobacterium</taxon>
        <taxon>Mycobacterium tuberculosis complex</taxon>
    </lineage>
</organism>
<feature type="chain" id="PRO_1000201476" description="Elongation factor G">
    <location>
        <begin position="1"/>
        <end position="701"/>
    </location>
</feature>
<feature type="domain" description="tr-type G">
    <location>
        <begin position="11"/>
        <end position="287"/>
    </location>
</feature>
<feature type="binding site" evidence="1">
    <location>
        <begin position="20"/>
        <end position="27"/>
    </location>
    <ligand>
        <name>GTP</name>
        <dbReference type="ChEBI" id="CHEBI:37565"/>
    </ligand>
</feature>
<feature type="binding site" evidence="1">
    <location>
        <begin position="84"/>
        <end position="88"/>
    </location>
    <ligand>
        <name>GTP</name>
        <dbReference type="ChEBI" id="CHEBI:37565"/>
    </ligand>
</feature>
<feature type="binding site" evidence="1">
    <location>
        <begin position="138"/>
        <end position="141"/>
    </location>
    <ligand>
        <name>GTP</name>
        <dbReference type="ChEBI" id="CHEBI:37565"/>
    </ligand>
</feature>
<keyword id="KW-0963">Cytoplasm</keyword>
<keyword id="KW-0251">Elongation factor</keyword>
<keyword id="KW-0342">GTP-binding</keyword>
<keyword id="KW-0547">Nucleotide-binding</keyword>
<keyword id="KW-0648">Protein biosynthesis</keyword>
<gene>
    <name evidence="1" type="primary">fusA</name>
    <name type="ordered locus">JTY_0703</name>
</gene>
<name>EFG_MYCBT</name>
<proteinExistence type="inferred from homology"/>